<keyword id="KW-0025">Alternative splicing</keyword>
<keyword id="KW-0150">Chloroplast</keyword>
<keyword id="KW-0238">DNA-binding</keyword>
<keyword id="KW-0496">Mitochondrion</keyword>
<keyword id="KW-0934">Plastid</keyword>
<keyword id="KW-1185">Reference proteome</keyword>
<keyword id="KW-0694">RNA-binding</keyword>
<keyword id="KW-0804">Transcription</keyword>
<keyword id="KW-0805">Transcription regulation</keyword>
<keyword id="KW-0806">Transcription termination</keyword>
<keyword id="KW-0809">Transit peptide</keyword>
<proteinExistence type="evidence at transcript level"/>
<evidence type="ECO:0000255" key="1"/>
<evidence type="ECO:0000269" key="2">
    <source>
    </source>
</evidence>
<evidence type="ECO:0000269" key="3">
    <source>
    </source>
</evidence>
<evidence type="ECO:0000303" key="4">
    <source>
    </source>
</evidence>
<evidence type="ECO:0000305" key="5"/>
<evidence type="ECO:0000312" key="6">
    <source>
        <dbReference type="Araport" id="AT4G38160"/>
    </source>
</evidence>
<evidence type="ECO:0000312" key="7">
    <source>
        <dbReference type="EMBL" id="CAB37556.1"/>
    </source>
</evidence>
<reference key="1">
    <citation type="journal article" date="1999" name="Nature">
        <title>Sequence and analysis of chromosome 4 of the plant Arabidopsis thaliana.</title>
        <authorList>
            <person name="Mayer K.F.X."/>
            <person name="Schueller C."/>
            <person name="Wambutt R."/>
            <person name="Murphy G."/>
            <person name="Volckaert G."/>
            <person name="Pohl T."/>
            <person name="Duesterhoeft A."/>
            <person name="Stiekema W."/>
            <person name="Entian K.-D."/>
            <person name="Terryn N."/>
            <person name="Harris B."/>
            <person name="Ansorge W."/>
            <person name="Brandt P."/>
            <person name="Grivell L.A."/>
            <person name="Rieger M."/>
            <person name="Weichselgartner M."/>
            <person name="de Simone V."/>
            <person name="Obermaier B."/>
            <person name="Mache R."/>
            <person name="Mueller M."/>
            <person name="Kreis M."/>
            <person name="Delseny M."/>
            <person name="Puigdomenech P."/>
            <person name="Watson M."/>
            <person name="Schmidtheini T."/>
            <person name="Reichert B."/>
            <person name="Portetelle D."/>
            <person name="Perez-Alonso M."/>
            <person name="Boutry M."/>
            <person name="Bancroft I."/>
            <person name="Vos P."/>
            <person name="Hoheisel J."/>
            <person name="Zimmermann W."/>
            <person name="Wedler H."/>
            <person name="Ridley P."/>
            <person name="Langham S.-A."/>
            <person name="McCullagh B."/>
            <person name="Bilham L."/>
            <person name="Robben J."/>
            <person name="van der Schueren J."/>
            <person name="Grymonprez B."/>
            <person name="Chuang Y.-J."/>
            <person name="Vandenbussche F."/>
            <person name="Braeken M."/>
            <person name="Weltjens I."/>
            <person name="Voet M."/>
            <person name="Bastiaens I."/>
            <person name="Aert R."/>
            <person name="Defoor E."/>
            <person name="Weitzenegger T."/>
            <person name="Bothe G."/>
            <person name="Ramsperger U."/>
            <person name="Hilbert H."/>
            <person name="Braun M."/>
            <person name="Holzer E."/>
            <person name="Brandt A."/>
            <person name="Peters S."/>
            <person name="van Staveren M."/>
            <person name="Dirkse W."/>
            <person name="Mooijman P."/>
            <person name="Klein Lankhorst R."/>
            <person name="Rose M."/>
            <person name="Hauf J."/>
            <person name="Koetter P."/>
            <person name="Berneiser S."/>
            <person name="Hempel S."/>
            <person name="Feldpausch M."/>
            <person name="Lamberth S."/>
            <person name="Van den Daele H."/>
            <person name="De Keyser A."/>
            <person name="Buysshaert C."/>
            <person name="Gielen J."/>
            <person name="Villarroel R."/>
            <person name="De Clercq R."/>
            <person name="van Montagu M."/>
            <person name="Rogers J."/>
            <person name="Cronin A."/>
            <person name="Quail M.A."/>
            <person name="Bray-Allen S."/>
            <person name="Clark L."/>
            <person name="Doggett J."/>
            <person name="Hall S."/>
            <person name="Kay M."/>
            <person name="Lennard N."/>
            <person name="McLay K."/>
            <person name="Mayes R."/>
            <person name="Pettett A."/>
            <person name="Rajandream M.A."/>
            <person name="Lyne M."/>
            <person name="Benes V."/>
            <person name="Rechmann S."/>
            <person name="Borkova D."/>
            <person name="Bloecker H."/>
            <person name="Scharfe M."/>
            <person name="Grimm M."/>
            <person name="Loehnert T.-H."/>
            <person name="Dose S."/>
            <person name="de Haan M."/>
            <person name="Maarse A.C."/>
            <person name="Schaefer M."/>
            <person name="Mueller-Auer S."/>
            <person name="Gabel C."/>
            <person name="Fuchs M."/>
            <person name="Fartmann B."/>
            <person name="Granderath K."/>
            <person name="Dauner D."/>
            <person name="Herzl A."/>
            <person name="Neumann S."/>
            <person name="Argiriou A."/>
            <person name="Vitale D."/>
            <person name="Liguori R."/>
            <person name="Piravandi E."/>
            <person name="Massenet O."/>
            <person name="Quigley F."/>
            <person name="Clabauld G."/>
            <person name="Muendlein A."/>
            <person name="Felber R."/>
            <person name="Schnabl S."/>
            <person name="Hiller R."/>
            <person name="Schmidt W."/>
            <person name="Lecharny A."/>
            <person name="Aubourg S."/>
            <person name="Chefdor F."/>
            <person name="Cooke R."/>
            <person name="Berger C."/>
            <person name="Monfort A."/>
            <person name="Casacuberta E."/>
            <person name="Gibbons T."/>
            <person name="Weber N."/>
            <person name="Vandenbol M."/>
            <person name="Bargues M."/>
            <person name="Terol J."/>
            <person name="Torres A."/>
            <person name="Perez-Perez A."/>
            <person name="Purnelle B."/>
            <person name="Bent E."/>
            <person name="Johnson S."/>
            <person name="Tacon D."/>
            <person name="Jesse T."/>
            <person name="Heijnen L."/>
            <person name="Schwarz S."/>
            <person name="Scholler P."/>
            <person name="Heber S."/>
            <person name="Francs P."/>
            <person name="Bielke C."/>
            <person name="Frishman D."/>
            <person name="Haase D."/>
            <person name="Lemcke K."/>
            <person name="Mewes H.-W."/>
            <person name="Stocker S."/>
            <person name="Zaccaria P."/>
            <person name="Bevan M."/>
            <person name="Wilson R.K."/>
            <person name="de la Bastide M."/>
            <person name="Habermann K."/>
            <person name="Parnell L."/>
            <person name="Dedhia N."/>
            <person name="Gnoj L."/>
            <person name="Schutz K."/>
            <person name="Huang E."/>
            <person name="Spiegel L."/>
            <person name="Sekhon M."/>
            <person name="Murray J."/>
            <person name="Sheet P."/>
            <person name="Cordes M."/>
            <person name="Abu-Threideh J."/>
            <person name="Stoneking T."/>
            <person name="Kalicki J."/>
            <person name="Graves T."/>
            <person name="Harmon G."/>
            <person name="Edwards J."/>
            <person name="Latreille P."/>
            <person name="Courtney L."/>
            <person name="Cloud J."/>
            <person name="Abbott A."/>
            <person name="Scott K."/>
            <person name="Johnson D."/>
            <person name="Minx P."/>
            <person name="Bentley D."/>
            <person name="Fulton B."/>
            <person name="Miller N."/>
            <person name="Greco T."/>
            <person name="Kemp K."/>
            <person name="Kramer J."/>
            <person name="Fulton L."/>
            <person name="Mardis E."/>
            <person name="Dante M."/>
            <person name="Pepin K."/>
            <person name="Hillier L.W."/>
            <person name="Nelson J."/>
            <person name="Spieth J."/>
            <person name="Ryan E."/>
            <person name="Andrews S."/>
            <person name="Geisel C."/>
            <person name="Layman D."/>
            <person name="Du H."/>
            <person name="Ali J."/>
            <person name="Berghoff A."/>
            <person name="Jones K."/>
            <person name="Drone K."/>
            <person name="Cotton M."/>
            <person name="Joshu C."/>
            <person name="Antonoiu B."/>
            <person name="Zidanic M."/>
            <person name="Strong C."/>
            <person name="Sun H."/>
            <person name="Lamar B."/>
            <person name="Yordan C."/>
            <person name="Ma P."/>
            <person name="Zhong J."/>
            <person name="Preston R."/>
            <person name="Vil D."/>
            <person name="Shekher M."/>
            <person name="Matero A."/>
            <person name="Shah R."/>
            <person name="Swaby I.K."/>
            <person name="O'Shaughnessy A."/>
            <person name="Rodriguez M."/>
            <person name="Hoffman J."/>
            <person name="Till S."/>
            <person name="Granat S."/>
            <person name="Shohdy N."/>
            <person name="Hasegawa A."/>
            <person name="Hameed A."/>
            <person name="Lodhi M."/>
            <person name="Johnson A."/>
            <person name="Chen E."/>
            <person name="Marra M.A."/>
            <person name="Martienssen R."/>
            <person name="McCombie W.R."/>
        </authorList>
    </citation>
    <scope>NUCLEOTIDE SEQUENCE [LARGE SCALE GENOMIC DNA]</scope>
    <source>
        <strain>cv. Columbia</strain>
    </source>
</reference>
<reference key="2">
    <citation type="journal article" date="2017" name="Plant J.">
        <title>Araport11: a complete reannotation of the Arabidopsis thaliana reference genome.</title>
        <authorList>
            <person name="Cheng C.Y."/>
            <person name="Krishnakumar V."/>
            <person name="Chan A.P."/>
            <person name="Thibaud-Nissen F."/>
            <person name="Schobel S."/>
            <person name="Town C.D."/>
        </authorList>
    </citation>
    <scope>GENOME REANNOTATION</scope>
    <source>
        <strain>cv. Columbia</strain>
    </source>
</reference>
<reference key="3">
    <citation type="journal article" date="2003" name="Science">
        <title>Empirical analysis of transcriptional activity in the Arabidopsis genome.</title>
        <authorList>
            <person name="Yamada K."/>
            <person name="Lim J."/>
            <person name="Dale J.M."/>
            <person name="Chen H."/>
            <person name="Shinn P."/>
            <person name="Palm C.J."/>
            <person name="Southwick A.M."/>
            <person name="Wu H.C."/>
            <person name="Kim C.J."/>
            <person name="Nguyen M."/>
            <person name="Pham P.K."/>
            <person name="Cheuk R.F."/>
            <person name="Karlin-Newmann G."/>
            <person name="Liu S.X."/>
            <person name="Lam B."/>
            <person name="Sakano H."/>
            <person name="Wu T."/>
            <person name="Yu G."/>
            <person name="Miranda M."/>
            <person name="Quach H.L."/>
            <person name="Tripp M."/>
            <person name="Chang C.H."/>
            <person name="Lee J.M."/>
            <person name="Toriumi M.J."/>
            <person name="Chan M.M."/>
            <person name="Tang C.C."/>
            <person name="Onodera C.S."/>
            <person name="Deng J.M."/>
            <person name="Akiyama K."/>
            <person name="Ansari Y."/>
            <person name="Arakawa T."/>
            <person name="Banh J."/>
            <person name="Banno F."/>
            <person name="Bowser L."/>
            <person name="Brooks S.Y."/>
            <person name="Carninci P."/>
            <person name="Chao Q."/>
            <person name="Choy N."/>
            <person name="Enju A."/>
            <person name="Goldsmith A.D."/>
            <person name="Gurjal M."/>
            <person name="Hansen N.F."/>
            <person name="Hayashizaki Y."/>
            <person name="Johnson-Hopson C."/>
            <person name="Hsuan V.W."/>
            <person name="Iida K."/>
            <person name="Karnes M."/>
            <person name="Khan S."/>
            <person name="Koesema E."/>
            <person name="Ishida J."/>
            <person name="Jiang P.X."/>
            <person name="Jones T."/>
            <person name="Kawai J."/>
            <person name="Kamiya A."/>
            <person name="Meyers C."/>
            <person name="Nakajima M."/>
            <person name="Narusaka M."/>
            <person name="Seki M."/>
            <person name="Sakurai T."/>
            <person name="Satou M."/>
            <person name="Tamse R."/>
            <person name="Vaysberg M."/>
            <person name="Wallender E.K."/>
            <person name="Wong C."/>
            <person name="Yamamura Y."/>
            <person name="Yuan S."/>
            <person name="Shinozaki K."/>
            <person name="Davis R.W."/>
            <person name="Theologis A."/>
            <person name="Ecker J.R."/>
        </authorList>
    </citation>
    <scope>NUCLEOTIDE SEQUENCE [LARGE SCALE MRNA]</scope>
    <source>
        <strain>cv. Columbia</strain>
    </source>
</reference>
<reference key="4">
    <citation type="journal article" date="2011" name="Proc. Natl. Acad. Sci. U.S.A.">
        <title>Plastid gene expression and plant development require a plastidic protein of the mitochondrial transcription termination factor family.</title>
        <authorList>
            <person name="Babiychuk E."/>
            <person name="Vandepoele K."/>
            <person name="Wissing J."/>
            <person name="Garcia-Diaz M."/>
            <person name="De Rycke R."/>
            <person name="Akbari H."/>
            <person name="Joubes J."/>
            <person name="Beeckman T."/>
            <person name="Jaensch L."/>
            <person name="Frentzen M."/>
            <person name="Van Montagu M.C."/>
            <person name="Kushnir S."/>
        </authorList>
    </citation>
    <scope>SUBCELLULAR LOCATION</scope>
</reference>
<reference key="5">
    <citation type="journal article" date="2012" name="Front. Plant Sci.">
        <title>Arabidopsis thaliana mTERF proteins: evolution and functional classification.</title>
        <authorList>
            <person name="Kleine T."/>
        </authorList>
    </citation>
    <scope>GENE FAMILY</scope>
</reference>
<reference key="6">
    <citation type="journal article" date="2015" name="Plant Physiol.">
        <title>A member of the Arabidopsis mitochondrial transcription termination factor family is required for maturation of chloroplast transfer RNAIle(GAU).</title>
        <authorList>
            <person name="Romani I."/>
            <person name="Manavski N."/>
            <person name="Morosetti A."/>
            <person name="Tadini L."/>
            <person name="Maier S."/>
            <person name="Kuehn K."/>
            <person name="Ruwe H."/>
            <person name="Schmitz-Linneweber C."/>
            <person name="Wanner G."/>
            <person name="Leister D."/>
            <person name="Kleine T."/>
        </authorList>
    </citation>
    <scope>FUNCTION</scope>
    <scope>SUBCELLULAR LOCATION</scope>
    <scope>DISRUPTION PHENOTYPE</scope>
</reference>
<feature type="transit peptide" description="Chloroplast and mitochondrion" evidence="1">
    <location>
        <begin position="1"/>
        <end status="unknown"/>
    </location>
</feature>
<feature type="chain" id="PRO_0000436199" description="Transcription termination factor MTERF6, chloroplastic/mitochondrial">
    <location>
        <begin status="unknown"/>
        <end position="333"/>
    </location>
</feature>
<comment type="function">
    <text>Transcription termination factor essential for chloroplast development. Required for maturation of 16S rRNA, 18S rRNA and 23S rRNA in the chloroplast. Binds to a specific region within the tRNA(Ile)(GAU) gene at a position adjacent to and downstream of the 16S rRNA gene. Required for the maturation of tRNA(Ile)(GAU). Binds to double-stranded DNA.</text>
</comment>
<comment type="subcellular location">
    <subcellularLocation>
        <location evidence="3">Plastid</location>
        <location evidence="3">Chloroplast</location>
    </subcellularLocation>
    <subcellularLocation>
        <location evidence="2 3">Mitochondrion</location>
    </subcellularLocation>
</comment>
<comment type="alternative products">
    <event type="alternative splicing"/>
    <isoform>
        <id>Q9SZL6-1</id>
        <name>1</name>
        <sequence type="displayed"/>
    </isoform>
    <text evidence="5">A number of isoforms are produced. According to EST sequences.</text>
</comment>
<comment type="disruption phenotype">
    <text evidence="3">Small white seeds, with defective choloroplasts, that are unable to germinate on soil. Albino seedlings that die rapidly when grown on synthetic medium.</text>
</comment>
<comment type="similarity">
    <text evidence="5">Belongs to the mTERF family.</text>
</comment>
<protein>
    <recommendedName>
        <fullName evidence="5">Transcription termination factor MTERF6, chloroplastic/mitochondrial</fullName>
    </recommendedName>
    <alternativeName>
        <fullName evidence="4">Mitochondrial transcription termination factor 6</fullName>
    </alternativeName>
    <alternativeName>
        <fullName evidence="5">Protein PIGMENT DEFECTIVE 191</fullName>
    </alternativeName>
</protein>
<sequence>MEVTNTSSIMWFFRDKGFDDPSIDKMLRKCKQLEKAQSDVASENWDYLSNIVGIQERKLPYIVSRCPKILTLRLDERLIPMVECLSSLGRNPREVASAITKFPPILSHSVEEKLCPLLAFFQALGVPETQLGKMILFNPRLISYSIDTKLTVIVSFLASLGLDQDGMIGKVLVKNPFLMGYSVDKRLRPTTEFLKSSVGLSEDGIKSVVMNFPQLLCRDVNKILKPNYDYLKECGFGDSQIATMVTGYPQILIKSVKNSLQPRIRFLVQVMGRGMDEVASYPEFFHHGLKKKVESRFKLVKKNNIDCSLREMLDCNTKKFHEKFGFSEVTASF</sequence>
<dbReference type="EMBL" id="AL035538">
    <property type="protein sequence ID" value="CAB37556.1"/>
    <property type="molecule type" value="Genomic_DNA"/>
</dbReference>
<dbReference type="EMBL" id="AL161593">
    <property type="protein sequence ID" value="CAB80481.1"/>
    <property type="molecule type" value="Genomic_DNA"/>
</dbReference>
<dbReference type="EMBL" id="CP002687">
    <property type="protein sequence ID" value="AEE86886.1"/>
    <property type="molecule type" value="Genomic_DNA"/>
</dbReference>
<dbReference type="EMBL" id="CP002687">
    <property type="protein sequence ID" value="ANM66664.1"/>
    <property type="molecule type" value="Genomic_DNA"/>
</dbReference>
<dbReference type="EMBL" id="AY093769">
    <property type="protein sequence ID" value="AAM10391.1"/>
    <property type="molecule type" value="mRNA"/>
</dbReference>
<dbReference type="EMBL" id="BT000548">
    <property type="protein sequence ID" value="AAN18117.1"/>
    <property type="molecule type" value="mRNA"/>
</dbReference>
<dbReference type="PIR" id="T05643">
    <property type="entry name" value="T05643"/>
</dbReference>
<dbReference type="RefSeq" id="NP_001320159.1">
    <molecule id="Q9SZL6-1"/>
    <property type="nucleotide sequence ID" value="NM_001342483.1"/>
</dbReference>
<dbReference type="RefSeq" id="NP_195529.1">
    <molecule id="Q9SZL6-1"/>
    <property type="nucleotide sequence ID" value="NM_119977.5"/>
</dbReference>
<dbReference type="SMR" id="Q9SZL6"/>
<dbReference type="FunCoup" id="Q9SZL6">
    <property type="interactions" value="1844"/>
</dbReference>
<dbReference type="STRING" id="3702.Q9SZL6"/>
<dbReference type="PaxDb" id="3702-AT4G38160.3"/>
<dbReference type="DNASU" id="829972"/>
<dbReference type="EnsemblPlants" id="AT4G38160.1">
    <molecule id="Q9SZL6-1"/>
    <property type="protein sequence ID" value="AT4G38160.1"/>
    <property type="gene ID" value="AT4G38160"/>
</dbReference>
<dbReference type="EnsemblPlants" id="AT4G38160.4">
    <molecule id="Q9SZL6-1"/>
    <property type="protein sequence ID" value="AT4G38160.4"/>
    <property type="gene ID" value="AT4G38160"/>
</dbReference>
<dbReference type="GeneID" id="829972"/>
<dbReference type="Gramene" id="AT4G38160.1">
    <molecule id="Q9SZL6-1"/>
    <property type="protein sequence ID" value="AT4G38160.1"/>
    <property type="gene ID" value="AT4G38160"/>
</dbReference>
<dbReference type="Gramene" id="AT4G38160.4">
    <molecule id="Q9SZL6-1"/>
    <property type="protein sequence ID" value="AT4G38160.4"/>
    <property type="gene ID" value="AT4G38160"/>
</dbReference>
<dbReference type="KEGG" id="ath:AT4G38160"/>
<dbReference type="Araport" id="AT4G38160"/>
<dbReference type="TAIR" id="AT4G38160">
    <property type="gene designation" value="PDE191"/>
</dbReference>
<dbReference type="eggNOG" id="KOG1267">
    <property type="taxonomic scope" value="Eukaryota"/>
</dbReference>
<dbReference type="HOGENOM" id="CLU_044150_0_0_1"/>
<dbReference type="InParanoid" id="Q9SZL6"/>
<dbReference type="OMA" id="AKEPYIM"/>
<dbReference type="PhylomeDB" id="Q9SZL6"/>
<dbReference type="PRO" id="PR:Q9SZL6"/>
<dbReference type="Proteomes" id="UP000006548">
    <property type="component" value="Chromosome 4"/>
</dbReference>
<dbReference type="ExpressionAtlas" id="Q9SZL6">
    <property type="expression patterns" value="baseline and differential"/>
</dbReference>
<dbReference type="GO" id="GO:0009507">
    <property type="term" value="C:chloroplast"/>
    <property type="evidence" value="ECO:0000314"/>
    <property type="project" value="UniProtKB"/>
</dbReference>
<dbReference type="GO" id="GO:0005739">
    <property type="term" value="C:mitochondrion"/>
    <property type="evidence" value="ECO:0000314"/>
    <property type="project" value="UniProtKB"/>
</dbReference>
<dbReference type="GO" id="GO:0003690">
    <property type="term" value="F:double-stranded DNA binding"/>
    <property type="evidence" value="ECO:0000314"/>
    <property type="project" value="UniProtKB"/>
</dbReference>
<dbReference type="GO" id="GO:0003723">
    <property type="term" value="F:RNA binding"/>
    <property type="evidence" value="ECO:0000314"/>
    <property type="project" value="UniProtKB"/>
</dbReference>
<dbReference type="GO" id="GO:0006353">
    <property type="term" value="P:DNA-templated transcription termination"/>
    <property type="evidence" value="ECO:0007669"/>
    <property type="project" value="UniProtKB-KW"/>
</dbReference>
<dbReference type="GO" id="GO:0006355">
    <property type="term" value="P:regulation of DNA-templated transcription"/>
    <property type="evidence" value="ECO:0007669"/>
    <property type="project" value="InterPro"/>
</dbReference>
<dbReference type="GO" id="GO:0008033">
    <property type="term" value="P:tRNA processing"/>
    <property type="evidence" value="ECO:0000315"/>
    <property type="project" value="UniProtKB"/>
</dbReference>
<dbReference type="FunFam" id="1.25.70.10:FF:000012">
    <property type="entry name" value="transcription termination factor MTERF6, chloroplastic/mitochondrial"/>
    <property type="match status" value="1"/>
</dbReference>
<dbReference type="Gene3D" id="1.25.70.10">
    <property type="entry name" value="Transcription termination factor 3, mitochondrial"/>
    <property type="match status" value="1"/>
</dbReference>
<dbReference type="InterPro" id="IPR003690">
    <property type="entry name" value="MTERF"/>
</dbReference>
<dbReference type="InterPro" id="IPR038538">
    <property type="entry name" value="MTERF_sf"/>
</dbReference>
<dbReference type="PANTHER" id="PTHR13068">
    <property type="entry name" value="CGI-12 PROTEIN-RELATED"/>
    <property type="match status" value="1"/>
</dbReference>
<dbReference type="PANTHER" id="PTHR13068:SF112">
    <property type="entry name" value="TRANSCRIPTION TERMINATION FACTOR 3, MITOCHONDRIAL"/>
    <property type="match status" value="1"/>
</dbReference>
<dbReference type="Pfam" id="PF02536">
    <property type="entry name" value="mTERF"/>
    <property type="match status" value="1"/>
</dbReference>
<dbReference type="SMART" id="SM00733">
    <property type="entry name" value="Mterf"/>
    <property type="match status" value="7"/>
</dbReference>
<organism>
    <name type="scientific">Arabidopsis thaliana</name>
    <name type="common">Mouse-ear cress</name>
    <dbReference type="NCBI Taxonomy" id="3702"/>
    <lineage>
        <taxon>Eukaryota</taxon>
        <taxon>Viridiplantae</taxon>
        <taxon>Streptophyta</taxon>
        <taxon>Embryophyta</taxon>
        <taxon>Tracheophyta</taxon>
        <taxon>Spermatophyta</taxon>
        <taxon>Magnoliopsida</taxon>
        <taxon>eudicotyledons</taxon>
        <taxon>Gunneridae</taxon>
        <taxon>Pentapetalae</taxon>
        <taxon>rosids</taxon>
        <taxon>malvids</taxon>
        <taxon>Brassicales</taxon>
        <taxon>Brassicaceae</taxon>
        <taxon>Camelineae</taxon>
        <taxon>Arabidopsis</taxon>
    </lineage>
</organism>
<gene>
    <name evidence="4" type="primary">MTERF6</name>
    <name evidence="5" type="synonym">PDE191</name>
    <name evidence="6" type="ordered locus">At4g38160</name>
    <name evidence="7" type="ORF">F20D10.280</name>
</gene>
<name>MTEF6_ARATH</name>
<accession>Q9SZL6</accession>